<dbReference type="EC" id="2.4.1.-"/>
<dbReference type="EMBL" id="AC005499">
    <property type="protein sequence ID" value="AAC67353.2"/>
    <property type="molecule type" value="Genomic_DNA"/>
</dbReference>
<dbReference type="EMBL" id="CP002685">
    <property type="protein sequence ID" value="AEC09562.1"/>
    <property type="molecule type" value="Genomic_DNA"/>
</dbReference>
<dbReference type="EMBL" id="CP002685">
    <property type="protein sequence ID" value="AEC09563.1"/>
    <property type="molecule type" value="Genomic_DNA"/>
</dbReference>
<dbReference type="EMBL" id="AY050982">
    <property type="protein sequence ID" value="AAK93659.1"/>
    <property type="molecule type" value="mRNA"/>
</dbReference>
<dbReference type="EMBL" id="AY091448">
    <property type="protein sequence ID" value="AAM14387.1"/>
    <property type="molecule type" value="mRNA"/>
</dbReference>
<dbReference type="PIR" id="F84807">
    <property type="entry name" value="F84807"/>
</dbReference>
<dbReference type="RefSeq" id="NP_001189702.1">
    <property type="nucleotide sequence ID" value="NM_001202773.2"/>
</dbReference>
<dbReference type="RefSeq" id="NP_565893.1">
    <property type="nucleotide sequence ID" value="NM_129422.4"/>
</dbReference>
<dbReference type="SMR" id="Q9ZVI7"/>
<dbReference type="BioGRID" id="3789">
    <property type="interactions" value="14"/>
</dbReference>
<dbReference type="FunCoup" id="Q9ZVI7">
    <property type="interactions" value="1628"/>
</dbReference>
<dbReference type="STRING" id="3702.Q9ZVI7"/>
<dbReference type="CAZy" id="GT8">
    <property type="family name" value="Glycosyltransferase Family 8"/>
</dbReference>
<dbReference type="GlyCosmos" id="Q9ZVI7">
    <property type="glycosylation" value="5 sites, No reported glycans"/>
</dbReference>
<dbReference type="GlyGen" id="Q9ZVI7">
    <property type="glycosylation" value="6 sites"/>
</dbReference>
<dbReference type="iPTMnet" id="Q9ZVI7"/>
<dbReference type="PaxDb" id="3702-AT2G38650.2"/>
<dbReference type="ProteomicsDB" id="222162"/>
<dbReference type="EnsemblPlants" id="AT2G38650.1">
    <property type="protein sequence ID" value="AT2G38650.1"/>
    <property type="gene ID" value="AT2G38650"/>
</dbReference>
<dbReference type="EnsemblPlants" id="AT2G38650.2">
    <property type="protein sequence ID" value="AT2G38650.2"/>
    <property type="gene ID" value="AT2G38650"/>
</dbReference>
<dbReference type="GeneID" id="818447"/>
<dbReference type="Gramene" id="AT2G38650.1">
    <property type="protein sequence ID" value="AT2G38650.1"/>
    <property type="gene ID" value="AT2G38650"/>
</dbReference>
<dbReference type="Gramene" id="AT2G38650.2">
    <property type="protein sequence ID" value="AT2G38650.2"/>
    <property type="gene ID" value="AT2G38650"/>
</dbReference>
<dbReference type="KEGG" id="ath:AT2G38650"/>
<dbReference type="Araport" id="AT2G38650"/>
<dbReference type="TAIR" id="AT2G38650">
    <property type="gene designation" value="GAUT7"/>
</dbReference>
<dbReference type="eggNOG" id="ENOG502QVSX">
    <property type="taxonomic scope" value="Eukaryota"/>
</dbReference>
<dbReference type="HOGENOM" id="CLU_010770_4_0_1"/>
<dbReference type="InParanoid" id="Q9ZVI7"/>
<dbReference type="OMA" id="FQHNDDE"/>
<dbReference type="PhylomeDB" id="Q9ZVI7"/>
<dbReference type="BRENDA" id="2.4.1.43">
    <property type="organism ID" value="399"/>
</dbReference>
<dbReference type="UniPathway" id="UPA00845"/>
<dbReference type="PRO" id="PR:Q9ZVI7"/>
<dbReference type="Proteomes" id="UP000006548">
    <property type="component" value="Chromosome 2"/>
</dbReference>
<dbReference type="ExpressionAtlas" id="Q9ZVI7">
    <property type="expression patterns" value="baseline and differential"/>
</dbReference>
<dbReference type="GO" id="GO:0005768">
    <property type="term" value="C:endosome"/>
    <property type="evidence" value="ECO:0007005"/>
    <property type="project" value="TAIR"/>
</dbReference>
<dbReference type="GO" id="GO:0005794">
    <property type="term" value="C:Golgi apparatus"/>
    <property type="evidence" value="ECO:0000314"/>
    <property type="project" value="TAIR"/>
</dbReference>
<dbReference type="GO" id="GO:0005797">
    <property type="term" value="C:Golgi medial cisterna"/>
    <property type="evidence" value="ECO:0007005"/>
    <property type="project" value="TAIR"/>
</dbReference>
<dbReference type="GO" id="GO:0000139">
    <property type="term" value="C:Golgi membrane"/>
    <property type="evidence" value="ECO:0007669"/>
    <property type="project" value="UniProtKB-SubCell"/>
</dbReference>
<dbReference type="GO" id="GO:0005802">
    <property type="term" value="C:trans-Golgi network"/>
    <property type="evidence" value="ECO:0007005"/>
    <property type="project" value="TAIR"/>
</dbReference>
<dbReference type="GO" id="GO:0047262">
    <property type="term" value="F:polygalacturonate 4-alpha-galacturonosyltransferase activity"/>
    <property type="evidence" value="ECO:0000250"/>
    <property type="project" value="TAIR"/>
</dbReference>
<dbReference type="GO" id="GO:0071555">
    <property type="term" value="P:cell wall organization"/>
    <property type="evidence" value="ECO:0007669"/>
    <property type="project" value="UniProtKB-KW"/>
</dbReference>
<dbReference type="GO" id="GO:0045489">
    <property type="term" value="P:pectin biosynthetic process"/>
    <property type="evidence" value="ECO:0007669"/>
    <property type="project" value="UniProtKB-UniPathway"/>
</dbReference>
<dbReference type="CDD" id="cd06429">
    <property type="entry name" value="GT8_like_1"/>
    <property type="match status" value="1"/>
</dbReference>
<dbReference type="FunFam" id="3.90.550.10:FF:000315">
    <property type="entry name" value="Hexosyltransferase"/>
    <property type="match status" value="1"/>
</dbReference>
<dbReference type="Gene3D" id="3.90.550.10">
    <property type="entry name" value="Spore Coat Polysaccharide Biosynthesis Protein SpsA, Chain A"/>
    <property type="match status" value="1"/>
</dbReference>
<dbReference type="InterPro" id="IPR029993">
    <property type="entry name" value="GAUT"/>
</dbReference>
<dbReference type="InterPro" id="IPR002495">
    <property type="entry name" value="Glyco_trans_8"/>
</dbReference>
<dbReference type="InterPro" id="IPR029044">
    <property type="entry name" value="Nucleotide-diphossugar_trans"/>
</dbReference>
<dbReference type="PANTHER" id="PTHR32116">
    <property type="entry name" value="GALACTURONOSYLTRANSFERASE 4-RELATED"/>
    <property type="match status" value="1"/>
</dbReference>
<dbReference type="PANTHER" id="PTHR32116:SF12">
    <property type="entry name" value="GALACTURONOSYLTRANSFERASE 7-RELATED"/>
    <property type="match status" value="1"/>
</dbReference>
<dbReference type="Pfam" id="PF01501">
    <property type="entry name" value="Glyco_transf_8"/>
    <property type="match status" value="1"/>
</dbReference>
<dbReference type="SUPFAM" id="SSF53448">
    <property type="entry name" value="Nucleotide-diphospho-sugar transferases"/>
    <property type="match status" value="1"/>
</dbReference>
<evidence type="ECO:0000250" key="1"/>
<evidence type="ECO:0000255" key="2"/>
<evidence type="ECO:0000256" key="3">
    <source>
        <dbReference type="SAM" id="MobiDB-lite"/>
    </source>
</evidence>
<evidence type="ECO:0000269" key="4">
    <source>
    </source>
</evidence>
<evidence type="ECO:0000269" key="5">
    <source>
    </source>
</evidence>
<evidence type="ECO:0000305" key="6"/>
<sequence>MKGGGGGGGGGGGGKRRWKVLVIGVLVLVILSMLVPLAFLLGLHNGFHSPGFVTVQPASSFESFTRINATKHTQRDVSERVDEVLQKINPVLPKKSDINVGSRDVNATSGTDSKKRGLPVSPTVVANPSPANKTKSEASYTGVQRKIVSGDETWRTCEVKYGSYCLWREENKEPMKDAKVKQMKDQLFVARAYYPSIAKMPSQSKLTRDMKQNIQEFERILSESSQDADLPPQVDKKLQKMEAVIAKAKSFPVDCNNVDKKLRQILDLTEDEASFHMKQSVFLYQLAVQTMPKSLHCLSMRLTVEHFKSDSLEDPISEKFSDPSLLHFVIISDNILASSVVINSTVVHARDSKNFVFHVLTDEQNYFAMKQWFIRNPCKQSTVQVLNIEKLELDDSDMKLSLSAEFRVSFPSGDLLASQQNRTHYLSLFSQSHYLLPKLFDKLEKVVILDDDVVVQRDLSPLWDLDMEGKVNGAVKSCTVRLGQLRSLKRGNFDTNACLWMSGLNVVDLARWRALGVSETYQKYYKEMSSGDESSEAIALQASLLTFQDQVYALDDKWALSGLGYDYYINAQAIKNAAILHYNGNMKPWLELGIPNYKNYWRRHLSREDRFLSDCNVNP</sequence>
<protein>
    <recommendedName>
        <fullName>Probable galacturonosyltransferase 7</fullName>
        <ecNumber>2.4.1.-</ecNumber>
    </recommendedName>
    <alternativeName>
        <fullName>Like glycosyl transferase 7</fullName>
    </alternativeName>
</protein>
<gene>
    <name type="primary">GAUT7</name>
    <name type="synonym">JS33</name>
    <name type="synonym">LGT7</name>
    <name type="ordered locus">At2g38650</name>
    <name type="ORF">T6A23.15</name>
</gene>
<feature type="chain" id="PRO_0000392299" description="Probable galacturonosyltransferase 7">
    <location>
        <begin position="1"/>
        <end position="619"/>
    </location>
</feature>
<feature type="topological domain" description="Cytoplasmic" evidence="2">
    <location>
        <begin position="1"/>
        <end position="19"/>
    </location>
</feature>
<feature type="transmembrane region" description="Helical; Signal-anchor for type II membrane protein" evidence="2">
    <location>
        <begin position="20"/>
        <end position="40"/>
    </location>
</feature>
<feature type="topological domain" description="Lumenal" evidence="2">
    <location>
        <begin position="41"/>
        <end position="619"/>
    </location>
</feature>
<feature type="region of interest" description="Disordered" evidence="3">
    <location>
        <begin position="95"/>
        <end position="139"/>
    </location>
</feature>
<feature type="compositionally biased region" description="Polar residues" evidence="3">
    <location>
        <begin position="124"/>
        <end position="139"/>
    </location>
</feature>
<feature type="glycosylation site" description="N-linked (GlcNAc...) asparagine" evidence="2">
    <location>
        <position position="68"/>
    </location>
</feature>
<feature type="glycosylation site" description="N-linked (GlcNAc...) asparagine" evidence="2">
    <location>
        <position position="106"/>
    </location>
</feature>
<feature type="glycosylation site" description="N-linked (GlcNAc...) asparagine" evidence="2">
    <location>
        <position position="132"/>
    </location>
</feature>
<feature type="glycosylation site" description="N-linked (GlcNAc...) asparagine" evidence="2">
    <location>
        <position position="343"/>
    </location>
</feature>
<feature type="glycosylation site" description="N-linked (GlcNAc...) asparagine" evidence="2">
    <location>
        <position position="421"/>
    </location>
</feature>
<organism>
    <name type="scientific">Arabidopsis thaliana</name>
    <name type="common">Mouse-ear cress</name>
    <dbReference type="NCBI Taxonomy" id="3702"/>
    <lineage>
        <taxon>Eukaryota</taxon>
        <taxon>Viridiplantae</taxon>
        <taxon>Streptophyta</taxon>
        <taxon>Embryophyta</taxon>
        <taxon>Tracheophyta</taxon>
        <taxon>Spermatophyta</taxon>
        <taxon>Magnoliopsida</taxon>
        <taxon>eudicotyledons</taxon>
        <taxon>Gunneridae</taxon>
        <taxon>Pentapetalae</taxon>
        <taxon>rosids</taxon>
        <taxon>malvids</taxon>
        <taxon>Brassicales</taxon>
        <taxon>Brassicaceae</taxon>
        <taxon>Camelineae</taxon>
        <taxon>Arabidopsis</taxon>
    </lineage>
</organism>
<comment type="function">
    <text evidence="1">May be involved in pectin biosynthesis.</text>
</comment>
<comment type="pathway">
    <text>Glycan metabolism; pectin biosynthesis.</text>
</comment>
<comment type="subcellular location">
    <subcellularLocation>
        <location evidence="1">Golgi apparatus membrane</location>
        <topology evidence="1">Single-pass type II membrane protein</topology>
    </subcellularLocation>
</comment>
<comment type="tissue specificity">
    <text evidence="4 5">Expressed in roots, inflorescences, flowers, siliques, leaves and stems.</text>
</comment>
<comment type="similarity">
    <text evidence="6">Belongs to the glycosyltransferase 8 family.</text>
</comment>
<keyword id="KW-0961">Cell wall biogenesis/degradation</keyword>
<keyword id="KW-0325">Glycoprotein</keyword>
<keyword id="KW-0328">Glycosyltransferase</keyword>
<keyword id="KW-0333">Golgi apparatus</keyword>
<keyword id="KW-0472">Membrane</keyword>
<keyword id="KW-1185">Reference proteome</keyword>
<keyword id="KW-0735">Signal-anchor</keyword>
<keyword id="KW-0808">Transferase</keyword>
<keyword id="KW-0812">Transmembrane</keyword>
<keyword id="KW-1133">Transmembrane helix</keyword>
<name>GAUT7_ARATH</name>
<proteinExistence type="evidence at protein level"/>
<accession>Q9ZVI7</accession>
<accession>Q949N9</accession>
<reference key="1">
    <citation type="journal article" date="1999" name="Nature">
        <title>Sequence and analysis of chromosome 2 of the plant Arabidopsis thaliana.</title>
        <authorList>
            <person name="Lin X."/>
            <person name="Kaul S."/>
            <person name="Rounsley S.D."/>
            <person name="Shea T.P."/>
            <person name="Benito M.-I."/>
            <person name="Town C.D."/>
            <person name="Fujii C.Y."/>
            <person name="Mason T.M."/>
            <person name="Bowman C.L."/>
            <person name="Barnstead M.E."/>
            <person name="Feldblyum T.V."/>
            <person name="Buell C.R."/>
            <person name="Ketchum K.A."/>
            <person name="Lee J.J."/>
            <person name="Ronning C.M."/>
            <person name="Koo H.L."/>
            <person name="Moffat K.S."/>
            <person name="Cronin L.A."/>
            <person name="Shen M."/>
            <person name="Pai G."/>
            <person name="Van Aken S."/>
            <person name="Umayam L."/>
            <person name="Tallon L.J."/>
            <person name="Gill J.E."/>
            <person name="Adams M.D."/>
            <person name="Carrera A.J."/>
            <person name="Creasy T.H."/>
            <person name="Goodman H.M."/>
            <person name="Somerville C.R."/>
            <person name="Copenhaver G.P."/>
            <person name="Preuss D."/>
            <person name="Nierman W.C."/>
            <person name="White O."/>
            <person name="Eisen J.A."/>
            <person name="Salzberg S.L."/>
            <person name="Fraser C.M."/>
            <person name="Venter J.C."/>
        </authorList>
    </citation>
    <scope>NUCLEOTIDE SEQUENCE [LARGE SCALE GENOMIC DNA]</scope>
    <source>
        <strain>cv. Columbia</strain>
    </source>
</reference>
<reference key="2">
    <citation type="journal article" date="2017" name="Plant J.">
        <title>Araport11: a complete reannotation of the Arabidopsis thaliana reference genome.</title>
        <authorList>
            <person name="Cheng C.Y."/>
            <person name="Krishnakumar V."/>
            <person name="Chan A.P."/>
            <person name="Thibaud-Nissen F."/>
            <person name="Schobel S."/>
            <person name="Town C.D."/>
        </authorList>
    </citation>
    <scope>GENOME REANNOTATION</scope>
    <source>
        <strain>cv. Columbia</strain>
    </source>
</reference>
<reference key="3">
    <citation type="journal article" date="2003" name="Science">
        <title>Empirical analysis of transcriptional activity in the Arabidopsis genome.</title>
        <authorList>
            <person name="Yamada K."/>
            <person name="Lim J."/>
            <person name="Dale J.M."/>
            <person name="Chen H."/>
            <person name="Shinn P."/>
            <person name="Palm C.J."/>
            <person name="Southwick A.M."/>
            <person name="Wu H.C."/>
            <person name="Kim C.J."/>
            <person name="Nguyen M."/>
            <person name="Pham P.K."/>
            <person name="Cheuk R.F."/>
            <person name="Karlin-Newmann G."/>
            <person name="Liu S.X."/>
            <person name="Lam B."/>
            <person name="Sakano H."/>
            <person name="Wu T."/>
            <person name="Yu G."/>
            <person name="Miranda M."/>
            <person name="Quach H.L."/>
            <person name="Tripp M."/>
            <person name="Chang C.H."/>
            <person name="Lee J.M."/>
            <person name="Toriumi M.J."/>
            <person name="Chan M.M."/>
            <person name="Tang C.C."/>
            <person name="Onodera C.S."/>
            <person name="Deng J.M."/>
            <person name="Akiyama K."/>
            <person name="Ansari Y."/>
            <person name="Arakawa T."/>
            <person name="Banh J."/>
            <person name="Banno F."/>
            <person name="Bowser L."/>
            <person name="Brooks S.Y."/>
            <person name="Carninci P."/>
            <person name="Chao Q."/>
            <person name="Choy N."/>
            <person name="Enju A."/>
            <person name="Goldsmith A.D."/>
            <person name="Gurjal M."/>
            <person name="Hansen N.F."/>
            <person name="Hayashizaki Y."/>
            <person name="Johnson-Hopson C."/>
            <person name="Hsuan V.W."/>
            <person name="Iida K."/>
            <person name="Karnes M."/>
            <person name="Khan S."/>
            <person name="Koesema E."/>
            <person name="Ishida J."/>
            <person name="Jiang P.X."/>
            <person name="Jones T."/>
            <person name="Kawai J."/>
            <person name="Kamiya A."/>
            <person name="Meyers C."/>
            <person name="Nakajima M."/>
            <person name="Narusaka M."/>
            <person name="Seki M."/>
            <person name="Sakurai T."/>
            <person name="Satou M."/>
            <person name="Tamse R."/>
            <person name="Vaysberg M."/>
            <person name="Wallender E.K."/>
            <person name="Wong C."/>
            <person name="Yamamura Y."/>
            <person name="Yuan S."/>
            <person name="Shinozaki K."/>
            <person name="Davis R.W."/>
            <person name="Theologis A."/>
            <person name="Ecker J.R."/>
        </authorList>
    </citation>
    <scope>NUCLEOTIDE SEQUENCE [LARGE SCALE MRNA]</scope>
    <source>
        <strain>cv. Columbia</strain>
    </source>
</reference>
<reference key="4">
    <citation type="journal article" date="2000" name="Plant Mol. Biol.">
        <title>Organization and structural evolution of four multigene families in Arabidopsis thaliana: AtLCAD, AtLGT, AtMYST and AtHD-GL2.</title>
        <authorList>
            <person name="Tavares R."/>
            <person name="Aubourg S."/>
            <person name="Lecharny A."/>
            <person name="Kreis M."/>
        </authorList>
    </citation>
    <scope>GENE FAMILY</scope>
    <scope>NOMENCLATURE</scope>
</reference>
<reference key="5">
    <citation type="journal article" date="2006" name="Proc. Natl. Acad. Sci. U.S.A.">
        <title>Functional identification of an Arabidopsis pectin biosynthetic homogalacturonan galacturonosyltransferase.</title>
        <authorList>
            <person name="Sterling J.D."/>
            <person name="Atmodjo M.A."/>
            <person name="Inwood S.E."/>
            <person name="Kumar Kolli V.S."/>
            <person name="Quigley H.F."/>
            <person name="Hahn M.G."/>
            <person name="Mohnen D."/>
        </authorList>
    </citation>
    <scope>IDENTIFICATION BY MASS SPECTROMETRY</scope>
    <scope>TISSUE SPECIFICITY</scope>
</reference>
<reference key="6">
    <citation type="journal article" date="2009" name="Mol. Plant">
        <title>Arabidopsis thaliana T-DNA mutants implicate GAUT genes in the biosynthesis of pectin and xylan in cell walls and seed testa.</title>
        <authorList>
            <person name="Caffall K.H."/>
            <person name="Pattathil S."/>
            <person name="Phillips S.E."/>
            <person name="Hahn M.G."/>
            <person name="Mohnen D."/>
        </authorList>
    </citation>
    <scope>TISSUE SPECIFICITY</scope>
</reference>